<sequence>MNTEAVAPDVAEEEVLTSYTSESSASADDAPKKERPALTVSGAAVGRRKEAIARVRVTPGTGKWIVNGRELADYFPNKLHQQEVNEPFKILDLDGAYDVAARISGGGPSGQAGALRLGVARSLNEIDVDNNRATLKKAGFLTRDARVIERKKAGLKKARKAPQYSKR</sequence>
<proteinExistence type="inferred from homology"/>
<keyword id="KW-1185">Reference proteome</keyword>
<keyword id="KW-0687">Ribonucleoprotein</keyword>
<keyword id="KW-0689">Ribosomal protein</keyword>
<gene>
    <name evidence="1" type="primary">rpsI</name>
    <name type="ordered locus">RSal33209_1736</name>
</gene>
<feature type="chain" id="PRO_1000128158" description="Small ribosomal subunit protein uS9">
    <location>
        <begin position="1"/>
        <end position="167"/>
    </location>
</feature>
<feature type="region of interest" description="Disordered" evidence="2">
    <location>
        <begin position="1"/>
        <end position="41"/>
    </location>
</feature>
<feature type="compositionally biased region" description="Polar residues" evidence="2">
    <location>
        <begin position="17"/>
        <end position="26"/>
    </location>
</feature>
<protein>
    <recommendedName>
        <fullName evidence="1">Small ribosomal subunit protein uS9</fullName>
    </recommendedName>
    <alternativeName>
        <fullName evidence="3">30S ribosomal protein S9</fullName>
    </alternativeName>
</protein>
<evidence type="ECO:0000255" key="1">
    <source>
        <dbReference type="HAMAP-Rule" id="MF_00532"/>
    </source>
</evidence>
<evidence type="ECO:0000256" key="2">
    <source>
        <dbReference type="SAM" id="MobiDB-lite"/>
    </source>
</evidence>
<evidence type="ECO:0000305" key="3"/>
<name>RS9_RENSM</name>
<reference key="1">
    <citation type="journal article" date="2008" name="J. Bacteriol.">
        <title>Genome sequence of the fish pathogen Renibacterium salmoninarum suggests reductive evolution away from an environmental Arthrobacter ancestor.</title>
        <authorList>
            <person name="Wiens G.D."/>
            <person name="Rockey D.D."/>
            <person name="Wu Z."/>
            <person name="Chang J."/>
            <person name="Levy R."/>
            <person name="Crane S."/>
            <person name="Chen D.S."/>
            <person name="Capri G.R."/>
            <person name="Burnett J.R."/>
            <person name="Sudheesh P.S."/>
            <person name="Schipma M.J."/>
            <person name="Burd H."/>
            <person name="Bhattacharyya A."/>
            <person name="Rhodes L.D."/>
            <person name="Kaul R."/>
            <person name="Strom M.S."/>
        </authorList>
    </citation>
    <scope>NUCLEOTIDE SEQUENCE [LARGE SCALE GENOMIC DNA]</scope>
    <source>
        <strain>ATCC 33209 / DSM 20767 / JCM 11484 / NBRC 15589 / NCIMB 2235</strain>
    </source>
</reference>
<dbReference type="EMBL" id="CP000910">
    <property type="protein sequence ID" value="ABY23472.1"/>
    <property type="molecule type" value="Genomic_DNA"/>
</dbReference>
<dbReference type="SMR" id="A9WMF9"/>
<dbReference type="STRING" id="288705.RSal33209_1736"/>
<dbReference type="KEGG" id="rsa:RSal33209_1736"/>
<dbReference type="eggNOG" id="COG0103">
    <property type="taxonomic scope" value="Bacteria"/>
</dbReference>
<dbReference type="HOGENOM" id="CLU_046483_2_0_11"/>
<dbReference type="Proteomes" id="UP000002007">
    <property type="component" value="Chromosome"/>
</dbReference>
<dbReference type="GO" id="GO:0005737">
    <property type="term" value="C:cytoplasm"/>
    <property type="evidence" value="ECO:0007669"/>
    <property type="project" value="UniProtKB-ARBA"/>
</dbReference>
<dbReference type="GO" id="GO:0015935">
    <property type="term" value="C:small ribosomal subunit"/>
    <property type="evidence" value="ECO:0007669"/>
    <property type="project" value="TreeGrafter"/>
</dbReference>
<dbReference type="GO" id="GO:0003723">
    <property type="term" value="F:RNA binding"/>
    <property type="evidence" value="ECO:0007669"/>
    <property type="project" value="TreeGrafter"/>
</dbReference>
<dbReference type="GO" id="GO:0003735">
    <property type="term" value="F:structural constituent of ribosome"/>
    <property type="evidence" value="ECO:0007669"/>
    <property type="project" value="InterPro"/>
</dbReference>
<dbReference type="GO" id="GO:0006412">
    <property type="term" value="P:translation"/>
    <property type="evidence" value="ECO:0007669"/>
    <property type="project" value="UniProtKB-UniRule"/>
</dbReference>
<dbReference type="FunFam" id="3.30.230.10:FF:000001">
    <property type="entry name" value="30S ribosomal protein S9"/>
    <property type="match status" value="1"/>
</dbReference>
<dbReference type="Gene3D" id="3.30.230.10">
    <property type="match status" value="1"/>
</dbReference>
<dbReference type="HAMAP" id="MF_00532_B">
    <property type="entry name" value="Ribosomal_uS9_B"/>
    <property type="match status" value="1"/>
</dbReference>
<dbReference type="InterPro" id="IPR020568">
    <property type="entry name" value="Ribosomal_Su5_D2-typ_SF"/>
</dbReference>
<dbReference type="InterPro" id="IPR000754">
    <property type="entry name" value="Ribosomal_uS9"/>
</dbReference>
<dbReference type="InterPro" id="IPR023035">
    <property type="entry name" value="Ribosomal_uS9_bac/plastid"/>
</dbReference>
<dbReference type="InterPro" id="IPR020574">
    <property type="entry name" value="Ribosomal_uS9_CS"/>
</dbReference>
<dbReference type="InterPro" id="IPR014721">
    <property type="entry name" value="Ribsml_uS5_D2-typ_fold_subgr"/>
</dbReference>
<dbReference type="NCBIfam" id="NF001099">
    <property type="entry name" value="PRK00132.1"/>
    <property type="match status" value="1"/>
</dbReference>
<dbReference type="PANTHER" id="PTHR21569">
    <property type="entry name" value="RIBOSOMAL PROTEIN S9"/>
    <property type="match status" value="1"/>
</dbReference>
<dbReference type="PANTHER" id="PTHR21569:SF1">
    <property type="entry name" value="SMALL RIBOSOMAL SUBUNIT PROTEIN US9M"/>
    <property type="match status" value="1"/>
</dbReference>
<dbReference type="Pfam" id="PF00380">
    <property type="entry name" value="Ribosomal_S9"/>
    <property type="match status" value="1"/>
</dbReference>
<dbReference type="SUPFAM" id="SSF54211">
    <property type="entry name" value="Ribosomal protein S5 domain 2-like"/>
    <property type="match status" value="1"/>
</dbReference>
<dbReference type="PROSITE" id="PS00360">
    <property type="entry name" value="RIBOSOMAL_S9"/>
    <property type="match status" value="1"/>
</dbReference>
<organism>
    <name type="scientific">Renibacterium salmoninarum (strain ATCC 33209 / DSM 20767 / JCM 11484 / NBRC 15589 / NCIMB 2235)</name>
    <dbReference type="NCBI Taxonomy" id="288705"/>
    <lineage>
        <taxon>Bacteria</taxon>
        <taxon>Bacillati</taxon>
        <taxon>Actinomycetota</taxon>
        <taxon>Actinomycetes</taxon>
        <taxon>Micrococcales</taxon>
        <taxon>Micrococcaceae</taxon>
        <taxon>Renibacterium</taxon>
    </lineage>
</organism>
<accession>A9WMF9</accession>
<comment type="similarity">
    <text evidence="1">Belongs to the universal ribosomal protein uS9 family.</text>
</comment>